<evidence type="ECO:0000255" key="1">
    <source>
        <dbReference type="HAMAP-Rule" id="MF_01549"/>
    </source>
</evidence>
<reference key="1">
    <citation type="journal article" date="2005" name="Nucleic Acids Res.">
        <title>Genome dynamics and diversity of Shigella species, the etiologic agents of bacillary dysentery.</title>
        <authorList>
            <person name="Yang F."/>
            <person name="Yang J."/>
            <person name="Zhang X."/>
            <person name="Chen L."/>
            <person name="Jiang Y."/>
            <person name="Yan Y."/>
            <person name="Tang X."/>
            <person name="Wang J."/>
            <person name="Xiong Z."/>
            <person name="Dong J."/>
            <person name="Xue Y."/>
            <person name="Zhu Y."/>
            <person name="Xu X."/>
            <person name="Sun L."/>
            <person name="Chen S."/>
            <person name="Nie H."/>
            <person name="Peng J."/>
            <person name="Xu J."/>
            <person name="Wang Y."/>
            <person name="Yuan Z."/>
            <person name="Wen Y."/>
            <person name="Yao Z."/>
            <person name="Shen Y."/>
            <person name="Qiang B."/>
            <person name="Hou Y."/>
            <person name="Yu J."/>
            <person name="Jin Q."/>
        </authorList>
    </citation>
    <scope>NUCLEOTIDE SEQUENCE [LARGE SCALE GENOMIC DNA]</scope>
    <source>
        <strain>Ss046</strain>
    </source>
</reference>
<feature type="chain" id="PRO_0000300617" description="Protein DsrB">
    <location>
        <begin position="1"/>
        <end position="62"/>
    </location>
</feature>
<accession>Q3Z0N6</accession>
<sequence>MKVNDRVTVKTDGGPRRPGVVLAVEEFSEGTMYLVSLEDYPLGIWFFNEAGHQDGIFVEKAE</sequence>
<keyword id="KW-1185">Reference proteome</keyword>
<gene>
    <name evidence="1" type="primary">dsrB</name>
    <name type="ordered locus">SSON_2010</name>
</gene>
<dbReference type="EMBL" id="CP000038">
    <property type="protein sequence ID" value="AAZ88676.1"/>
    <property type="molecule type" value="Genomic_DNA"/>
</dbReference>
<dbReference type="RefSeq" id="WP_000867217.1">
    <property type="nucleotide sequence ID" value="NC_007384.1"/>
</dbReference>
<dbReference type="SMR" id="Q3Z0N6"/>
<dbReference type="GeneID" id="93775233"/>
<dbReference type="KEGG" id="ssn:SSON_2010"/>
<dbReference type="HOGENOM" id="CLU_189289_0_0_6"/>
<dbReference type="Proteomes" id="UP000002529">
    <property type="component" value="Chromosome"/>
</dbReference>
<dbReference type="HAMAP" id="MF_01549">
    <property type="entry name" value="DsrB"/>
    <property type="match status" value="1"/>
</dbReference>
<dbReference type="InterPro" id="IPR019717">
    <property type="entry name" value="Dextransucrase_DSRB"/>
</dbReference>
<dbReference type="NCBIfam" id="NF007981">
    <property type="entry name" value="PRK10708.1"/>
    <property type="match status" value="1"/>
</dbReference>
<dbReference type="Pfam" id="PF10781">
    <property type="entry name" value="DSRB"/>
    <property type="match status" value="1"/>
</dbReference>
<proteinExistence type="inferred from homology"/>
<comment type="similarity">
    <text evidence="1">Belongs to the DsrB family.</text>
</comment>
<name>DSRB_SHISS</name>
<protein>
    <recommendedName>
        <fullName evidence="1">Protein DsrB</fullName>
    </recommendedName>
</protein>
<organism>
    <name type="scientific">Shigella sonnei (strain Ss046)</name>
    <dbReference type="NCBI Taxonomy" id="300269"/>
    <lineage>
        <taxon>Bacteria</taxon>
        <taxon>Pseudomonadati</taxon>
        <taxon>Pseudomonadota</taxon>
        <taxon>Gammaproteobacteria</taxon>
        <taxon>Enterobacterales</taxon>
        <taxon>Enterobacteriaceae</taxon>
        <taxon>Shigella</taxon>
    </lineage>
</organism>